<evidence type="ECO:0000255" key="1">
    <source>
        <dbReference type="HAMAP-Rule" id="MF_00605"/>
    </source>
</evidence>
<sequence>MRVDVVSIFPEYFAPLDLSLIGRARASGTLQLAVHDLRTWTHDVHRTVDDTPYGGGPGMVMRPEPWGEALEALAPPGGNPPRLLVPTPAGAPFTQALAHELAAEPHLLFACGRYEGIDQRVLEHAASRMPVTEVSLGDYVLFGGEVAVLVILEAVTRLLPGVLGNVGSLDDESHAHGLLEAPMYTKPAVWRGQEVPTVLRSGDHGKIARWRRDEALARTVARRPDMIAALPPECLDPRDRAALERAGFPDPPEGVAK</sequence>
<dbReference type="EC" id="2.1.1.228" evidence="1"/>
<dbReference type="EMBL" id="CP000667">
    <property type="protein sequence ID" value="ABP53778.1"/>
    <property type="molecule type" value="Genomic_DNA"/>
</dbReference>
<dbReference type="RefSeq" id="WP_011905210.1">
    <property type="nucleotide sequence ID" value="NC_009380.1"/>
</dbReference>
<dbReference type="SMR" id="A4X4H8"/>
<dbReference type="STRING" id="369723.Strop_1308"/>
<dbReference type="KEGG" id="stp:Strop_1308"/>
<dbReference type="PATRIC" id="fig|369723.5.peg.1332"/>
<dbReference type="eggNOG" id="COG0336">
    <property type="taxonomic scope" value="Bacteria"/>
</dbReference>
<dbReference type="HOGENOM" id="CLU_047363_0_0_11"/>
<dbReference type="Proteomes" id="UP000000235">
    <property type="component" value="Chromosome"/>
</dbReference>
<dbReference type="GO" id="GO:0005829">
    <property type="term" value="C:cytosol"/>
    <property type="evidence" value="ECO:0007669"/>
    <property type="project" value="TreeGrafter"/>
</dbReference>
<dbReference type="GO" id="GO:0052906">
    <property type="term" value="F:tRNA (guanine(37)-N1)-methyltransferase activity"/>
    <property type="evidence" value="ECO:0007669"/>
    <property type="project" value="UniProtKB-UniRule"/>
</dbReference>
<dbReference type="GO" id="GO:0002939">
    <property type="term" value="P:tRNA N1-guanine methylation"/>
    <property type="evidence" value="ECO:0007669"/>
    <property type="project" value="TreeGrafter"/>
</dbReference>
<dbReference type="CDD" id="cd18080">
    <property type="entry name" value="TrmD-like"/>
    <property type="match status" value="1"/>
</dbReference>
<dbReference type="FunFam" id="1.10.1270.20:FF:000002">
    <property type="entry name" value="tRNA (guanine-N(1)-)-methyltransferase"/>
    <property type="match status" value="1"/>
</dbReference>
<dbReference type="FunFam" id="3.40.1280.10:FF:000001">
    <property type="entry name" value="tRNA (guanine-N(1)-)-methyltransferase"/>
    <property type="match status" value="1"/>
</dbReference>
<dbReference type="Gene3D" id="3.40.1280.10">
    <property type="match status" value="1"/>
</dbReference>
<dbReference type="Gene3D" id="1.10.1270.20">
    <property type="entry name" value="tRNA(m1g37)methyltransferase, domain 2"/>
    <property type="match status" value="1"/>
</dbReference>
<dbReference type="HAMAP" id="MF_00605">
    <property type="entry name" value="TrmD"/>
    <property type="match status" value="1"/>
</dbReference>
<dbReference type="InterPro" id="IPR029028">
    <property type="entry name" value="Alpha/beta_knot_MTases"/>
</dbReference>
<dbReference type="InterPro" id="IPR023148">
    <property type="entry name" value="tRNA_m1G_MeTrfase_C_sf"/>
</dbReference>
<dbReference type="InterPro" id="IPR002649">
    <property type="entry name" value="tRNA_m1G_MeTrfase_TrmD"/>
</dbReference>
<dbReference type="InterPro" id="IPR029026">
    <property type="entry name" value="tRNA_m1G_MTases_N"/>
</dbReference>
<dbReference type="InterPro" id="IPR016009">
    <property type="entry name" value="tRNA_MeTrfase_TRMD/TRM10"/>
</dbReference>
<dbReference type="NCBIfam" id="NF000648">
    <property type="entry name" value="PRK00026.1"/>
    <property type="match status" value="1"/>
</dbReference>
<dbReference type="NCBIfam" id="TIGR00088">
    <property type="entry name" value="trmD"/>
    <property type="match status" value="1"/>
</dbReference>
<dbReference type="PANTHER" id="PTHR46417">
    <property type="entry name" value="TRNA (GUANINE-N(1)-)-METHYLTRANSFERASE"/>
    <property type="match status" value="1"/>
</dbReference>
<dbReference type="PANTHER" id="PTHR46417:SF1">
    <property type="entry name" value="TRNA (GUANINE-N(1)-)-METHYLTRANSFERASE"/>
    <property type="match status" value="1"/>
</dbReference>
<dbReference type="Pfam" id="PF01746">
    <property type="entry name" value="tRNA_m1G_MT"/>
    <property type="match status" value="1"/>
</dbReference>
<dbReference type="PIRSF" id="PIRSF000386">
    <property type="entry name" value="tRNA_mtase"/>
    <property type="match status" value="1"/>
</dbReference>
<dbReference type="SUPFAM" id="SSF75217">
    <property type="entry name" value="alpha/beta knot"/>
    <property type="match status" value="1"/>
</dbReference>
<protein>
    <recommendedName>
        <fullName evidence="1">tRNA (guanine-N(1)-)-methyltransferase</fullName>
        <ecNumber evidence="1">2.1.1.228</ecNumber>
    </recommendedName>
    <alternativeName>
        <fullName evidence="1">M1G-methyltransferase</fullName>
    </alternativeName>
    <alternativeName>
        <fullName evidence="1">tRNA [GM37] methyltransferase</fullName>
    </alternativeName>
</protein>
<accession>A4X4H8</accession>
<proteinExistence type="inferred from homology"/>
<organism>
    <name type="scientific">Salinispora tropica (strain ATCC BAA-916 / DSM 44818 / JCM 13857 / NBRC 105044 / CNB-440)</name>
    <dbReference type="NCBI Taxonomy" id="369723"/>
    <lineage>
        <taxon>Bacteria</taxon>
        <taxon>Bacillati</taxon>
        <taxon>Actinomycetota</taxon>
        <taxon>Actinomycetes</taxon>
        <taxon>Micromonosporales</taxon>
        <taxon>Micromonosporaceae</taxon>
        <taxon>Salinispora</taxon>
    </lineage>
</organism>
<reference key="1">
    <citation type="journal article" date="2007" name="Proc. Natl. Acad. Sci. U.S.A.">
        <title>Genome sequencing reveals complex secondary metabolome in the marine actinomycete Salinispora tropica.</title>
        <authorList>
            <person name="Udwary D.W."/>
            <person name="Zeigler L."/>
            <person name="Asolkar R.N."/>
            <person name="Singan V."/>
            <person name="Lapidus A."/>
            <person name="Fenical W."/>
            <person name="Jensen P.R."/>
            <person name="Moore B.S."/>
        </authorList>
    </citation>
    <scope>NUCLEOTIDE SEQUENCE [LARGE SCALE GENOMIC DNA]</scope>
    <source>
        <strain>ATCC BAA-916 / DSM 44818 / JCM 13857 / NBRC 105044 / CNB-440</strain>
    </source>
</reference>
<name>TRMD_SALTO</name>
<keyword id="KW-0963">Cytoplasm</keyword>
<keyword id="KW-0489">Methyltransferase</keyword>
<keyword id="KW-1185">Reference proteome</keyword>
<keyword id="KW-0949">S-adenosyl-L-methionine</keyword>
<keyword id="KW-0808">Transferase</keyword>
<keyword id="KW-0819">tRNA processing</keyword>
<feature type="chain" id="PRO_1000082533" description="tRNA (guanine-N(1)-)-methyltransferase">
    <location>
        <begin position="1"/>
        <end position="257"/>
    </location>
</feature>
<feature type="binding site" evidence="1">
    <location>
        <position position="112"/>
    </location>
    <ligand>
        <name>S-adenosyl-L-methionine</name>
        <dbReference type="ChEBI" id="CHEBI:59789"/>
    </ligand>
</feature>
<feature type="binding site" evidence="1">
    <location>
        <begin position="136"/>
        <end position="141"/>
    </location>
    <ligand>
        <name>S-adenosyl-L-methionine</name>
        <dbReference type="ChEBI" id="CHEBI:59789"/>
    </ligand>
</feature>
<comment type="function">
    <text evidence="1">Specifically methylates guanosine-37 in various tRNAs.</text>
</comment>
<comment type="catalytic activity">
    <reaction evidence="1">
        <text>guanosine(37) in tRNA + S-adenosyl-L-methionine = N(1)-methylguanosine(37) in tRNA + S-adenosyl-L-homocysteine + H(+)</text>
        <dbReference type="Rhea" id="RHEA:36899"/>
        <dbReference type="Rhea" id="RHEA-COMP:10145"/>
        <dbReference type="Rhea" id="RHEA-COMP:10147"/>
        <dbReference type="ChEBI" id="CHEBI:15378"/>
        <dbReference type="ChEBI" id="CHEBI:57856"/>
        <dbReference type="ChEBI" id="CHEBI:59789"/>
        <dbReference type="ChEBI" id="CHEBI:73542"/>
        <dbReference type="ChEBI" id="CHEBI:74269"/>
        <dbReference type="EC" id="2.1.1.228"/>
    </reaction>
</comment>
<comment type="subunit">
    <text evidence="1">Homodimer.</text>
</comment>
<comment type="subcellular location">
    <subcellularLocation>
        <location evidence="1">Cytoplasm</location>
    </subcellularLocation>
</comment>
<comment type="similarity">
    <text evidence="1">Belongs to the RNA methyltransferase TrmD family.</text>
</comment>
<gene>
    <name evidence="1" type="primary">trmD</name>
    <name type="ordered locus">Strop_1308</name>
</gene>